<reference key="1">
    <citation type="journal article" date="2015" name="Genome Announc.">
        <title>Genome sequence of Aspergillus flavus NRRL 3357, a strain that causes aflatoxin contamination of food and feed.</title>
        <authorList>
            <person name="Nierman W.C."/>
            <person name="Yu J."/>
            <person name="Fedorova-Abrams N.D."/>
            <person name="Losada L."/>
            <person name="Cleveland T.E."/>
            <person name="Bhatnagar D."/>
            <person name="Bennett J.W."/>
            <person name="Dean R."/>
            <person name="Payne G.A."/>
        </authorList>
    </citation>
    <scope>NUCLEOTIDE SEQUENCE [LARGE SCALE GENOMIC DNA]</scope>
    <source>
        <strain>ATCC 200026 / FGSC A1120 / IAM 13836 / NRRL 3357 / JCM 12722 / SRRC 167</strain>
    </source>
</reference>
<reference key="2">
    <citation type="journal article" date="2018" name="ACS Chem. Biol.">
        <title>NRPS-derived isoquinolines and lipopetides mediate antagonism between plant pathogenic fungi and bacteria.</title>
        <authorList>
            <person name="Khalid S."/>
            <person name="Baccile J.A."/>
            <person name="Spraker J.E."/>
            <person name="Tannous J."/>
            <person name="Imran M."/>
            <person name="Schroeder F.C."/>
            <person name="Keller N.P."/>
        </authorList>
    </citation>
    <scope>INDUCTION</scope>
    <scope>FUNCTION</scope>
    <scope>PATHWAY</scope>
</reference>
<organism>
    <name type="scientific">Aspergillus flavus (strain ATCC 200026 / FGSC A1120 / IAM 13836 / NRRL 3357 / JCM 12722 / SRRC 167)</name>
    <dbReference type="NCBI Taxonomy" id="332952"/>
    <lineage>
        <taxon>Eukaryota</taxon>
        <taxon>Fungi</taxon>
        <taxon>Dikarya</taxon>
        <taxon>Ascomycota</taxon>
        <taxon>Pezizomycotina</taxon>
        <taxon>Eurotiomycetes</taxon>
        <taxon>Eurotiomycetidae</taxon>
        <taxon>Eurotiales</taxon>
        <taxon>Aspergillaceae</taxon>
        <taxon>Aspergillus</taxon>
        <taxon>Aspergillus subgen. Circumdati</taxon>
    </lineage>
</organism>
<proteinExistence type="evidence at transcript level"/>
<sequence>MSSGEPTTMTPSPSERTPLLSNGSGGAADDGGTTVTISKPNDGVRRIADSLPLSVWLISTIELCERFAYFGTIAPMQNYIQNPRNDPLRPGGIGKTASTMIYPAV</sequence>
<name>IMQI_ASPFN</name>
<feature type="chain" id="PRO_0000444546" description="Imizoquin biosynthesis cluster protein I">
    <location>
        <begin position="1"/>
        <end position="105"/>
    </location>
</feature>
<feature type="region of interest" description="Disordered" evidence="1">
    <location>
        <begin position="1"/>
        <end position="43"/>
    </location>
</feature>
<feature type="compositionally biased region" description="Polar residues" evidence="1">
    <location>
        <begin position="1"/>
        <end position="15"/>
    </location>
</feature>
<comment type="function">
    <text evidence="2">Part of the gene cluster that mediates the biosynthesis of imizoquins A to D, tripeptide-derived alkaloids that serve a protective role against oxidative stress that are essential for normal germination (PubMed:29182847). ImqB is a canonical three-module NRPS that assembles the tripeptide backbone of the imizoquins via condensation of Trp, Tyr, and Leu-derived precursors (PubMed:29182847). N-methylation by imqF and phenol oxidation by imqC, followed by cyclization via the FAD-dependent oxidase imqH carry out the three-step transformation of L-tyrosine into tetrahydroisoquinoline (PubMed:29182847). Importantly, this sequence requires the presence of a free amine in the tyrosine moiety, indicating that isoquinoline formation occurs prior to peptide bond formation (PubMed:29182847). The imidazolidin-4-one ring of imizoquins could form following additional oxidation of the methyl-derived bridgehead carbon by imqH (PubMed:29182847). Lastly, O-methylation by imqG and leucine hydroxylation by imqE complete biosynthesis of the imizoquins (PubMed:29182847).</text>
</comment>
<comment type="pathway">
    <text evidence="4">Secondary metabolite biosynthesis.</text>
</comment>
<comment type="induction">
    <text evidence="2">Expression is down-regulated by ralstonins, lipopeptides produced by the plant pathogenic bacteria Ralstonia solanacearum (PubMed:29182847). Expression is positively regulated by the imizoquins cluster-specific transcription regulator imqK (PubMed:29182847).</text>
</comment>
<gene>
    <name evidence="3" type="primary">imqI</name>
    <name type="ORF">AFLA_064310</name>
</gene>
<accession>B8NI26</accession>
<dbReference type="EMBL" id="EQ963479">
    <property type="protein sequence ID" value="EED49610.1"/>
    <property type="molecule type" value="Genomic_DNA"/>
</dbReference>
<dbReference type="RefSeq" id="XP_002379991.1">
    <property type="nucleotide sequence ID" value="XM_002379950.1"/>
</dbReference>
<dbReference type="STRING" id="332952.B8NI26"/>
<dbReference type="EnsemblFungi" id="EED49610">
    <property type="protein sequence ID" value="EED49610"/>
    <property type="gene ID" value="AFLA_064310"/>
</dbReference>
<dbReference type="VEuPathDB" id="FungiDB:AFLA_008365"/>
<dbReference type="HOGENOM" id="CLU_2235998_0_0_1"/>
<dbReference type="Gene3D" id="1.20.1250.20">
    <property type="entry name" value="MFS general substrate transporter like domains"/>
    <property type="match status" value="1"/>
</dbReference>
<dbReference type="InterPro" id="IPR036259">
    <property type="entry name" value="MFS_trans_sf"/>
</dbReference>
<evidence type="ECO:0000256" key="1">
    <source>
        <dbReference type="SAM" id="MobiDB-lite"/>
    </source>
</evidence>
<evidence type="ECO:0000269" key="2">
    <source>
    </source>
</evidence>
<evidence type="ECO:0000303" key="3">
    <source>
    </source>
</evidence>
<evidence type="ECO:0000305" key="4">
    <source>
    </source>
</evidence>
<protein>
    <recommendedName>
        <fullName evidence="3">Imizoquin biosynthesis cluster protein I</fullName>
    </recommendedName>
</protein>